<gene>
    <name type="ORF">ARB_06334</name>
</gene>
<protein>
    <recommendedName>
        <fullName evidence="5">Putative secreted metallopeptidase</fullName>
        <ecNumber evidence="5">3.4.24.-</ecNumber>
    </recommendedName>
</protein>
<sequence length="687" mass="75039">MLFTSTAVAALSGALLIQPALAAPNGLPSHGGSHHGPKDPFEVLDPQNWVNPDNMTWADFKSPPGTKWNDPSRKGSIRNFNIALVNVDYPDKPFTITMAPGSDVFKNPQPGSPNVTRSQVPAFYRDFLNKPGKLNRGHTLHEYWMEDSNGRFGVDLTTFGVYKMPLKSYQYGIGESMNAGACPIGETCYYEIRDDALGAWRKDIGEEKAKSFELVFILSAGQDESSTWQEFGEIMFQNKEDVTSAFGPPPGNGTGNMTLPNYAKTRYVEWTSWASASAIWPNAGDGSSTQAESSGMGTFAHELSHLLNVGDNYNNPYGKPLRRSYTGPWSMMSRGSFNGPGGPHTRWQVPPLQGGSMGSQHTFHDKIRLGLTTKDSALNISREALANSGLIVARVTARVIAPKPGDLIGIHVAMDKDKSPKCDVNTDPYCDGNGYQNYNVEVIDRMGADSFCPDSGVMLSKTRDKAFSNYQWTIDANPQDIKQVDFHRPDGTPAMISLGDYRQLADALFHAGTRSGSQYEYTDKANNLQFYIIEPHRDEAGVLSYTTAVRYVGGKDPHKRGVKLDKNAKITSSNTKPTDKGVTCSFTLHNTGTYNPAAGKAKHPQDVTAYLKSDVYRLKATVEGRGWRVEVPNALATAEFGKTVTVSVAVGAENSAQDKAKVTLTATSEADPSKFATAECKVNKFRN</sequence>
<organism>
    <name type="scientific">Arthroderma benhamiae (strain ATCC MYA-4681 / CBS 112371)</name>
    <name type="common">Trichophyton mentagrophytes</name>
    <dbReference type="NCBI Taxonomy" id="663331"/>
    <lineage>
        <taxon>Eukaryota</taxon>
        <taxon>Fungi</taxon>
        <taxon>Dikarya</taxon>
        <taxon>Ascomycota</taxon>
        <taxon>Pezizomycotina</taxon>
        <taxon>Eurotiomycetes</taxon>
        <taxon>Eurotiomycetidae</taxon>
        <taxon>Onygenales</taxon>
        <taxon>Arthrodermataceae</taxon>
        <taxon>Trichophyton</taxon>
    </lineage>
</organism>
<proteinExistence type="evidence at protein level"/>
<dbReference type="EC" id="3.4.24.-" evidence="5"/>
<dbReference type="EMBL" id="ABSU01000005">
    <property type="protein sequence ID" value="EFE34571.1"/>
    <property type="molecule type" value="Genomic_DNA"/>
</dbReference>
<dbReference type="RefSeq" id="XP_003015211.1">
    <property type="nucleotide sequence ID" value="XM_003015165.1"/>
</dbReference>
<dbReference type="STRING" id="663331.D4AQ27"/>
<dbReference type="GeneID" id="9520935"/>
<dbReference type="KEGG" id="abe:ARB_06334"/>
<dbReference type="eggNOG" id="ENOG502QVPB">
    <property type="taxonomic scope" value="Eukaryota"/>
</dbReference>
<dbReference type="HOGENOM" id="CLU_013425_0_0_1"/>
<dbReference type="OMA" id="IWPNAGG"/>
<dbReference type="OrthoDB" id="3852498at2759"/>
<dbReference type="Proteomes" id="UP000008866">
    <property type="component" value="Unassembled WGS sequence"/>
</dbReference>
<dbReference type="GO" id="GO:0005576">
    <property type="term" value="C:extracellular region"/>
    <property type="evidence" value="ECO:0007669"/>
    <property type="project" value="UniProtKB-SubCell"/>
</dbReference>
<dbReference type="GO" id="GO:0008237">
    <property type="term" value="F:metallopeptidase activity"/>
    <property type="evidence" value="ECO:0007669"/>
    <property type="project" value="UniProtKB-KW"/>
</dbReference>
<dbReference type="GO" id="GO:0006508">
    <property type="term" value="P:proteolysis"/>
    <property type="evidence" value="ECO:0007669"/>
    <property type="project" value="UniProtKB-KW"/>
</dbReference>
<dbReference type="InterPro" id="IPR008757">
    <property type="entry name" value="Peptidase_M6-like_domain"/>
</dbReference>
<dbReference type="NCBIfam" id="TIGR03296">
    <property type="entry name" value="M6dom_TIGR03296"/>
    <property type="match status" value="1"/>
</dbReference>
<dbReference type="SUPFAM" id="SSF55486">
    <property type="entry name" value="Metalloproteases ('zincins'), catalytic domain"/>
    <property type="match status" value="1"/>
</dbReference>
<dbReference type="PROSITE" id="PS00142">
    <property type="entry name" value="ZINC_PROTEASE"/>
    <property type="match status" value="1"/>
</dbReference>
<reference key="1">
    <citation type="journal article" date="2011" name="Genome Biol.">
        <title>Comparative and functional genomics provide insights into the pathogenicity of dermatophytic fungi.</title>
        <authorList>
            <person name="Burmester A."/>
            <person name="Shelest E."/>
            <person name="Gloeckner G."/>
            <person name="Heddergott C."/>
            <person name="Schindler S."/>
            <person name="Staib P."/>
            <person name="Heidel A."/>
            <person name="Felder M."/>
            <person name="Petzold A."/>
            <person name="Szafranski K."/>
            <person name="Feuermann M."/>
            <person name="Pedruzzi I."/>
            <person name="Priebe S."/>
            <person name="Groth M."/>
            <person name="Winkler R."/>
            <person name="Li W."/>
            <person name="Kniemeyer O."/>
            <person name="Schroeckh V."/>
            <person name="Hertweck C."/>
            <person name="Hube B."/>
            <person name="White T.C."/>
            <person name="Platzer M."/>
            <person name="Guthke R."/>
            <person name="Heitman J."/>
            <person name="Woestemeyer J."/>
            <person name="Zipfel P.F."/>
            <person name="Monod M."/>
            <person name="Brakhage A.A."/>
        </authorList>
    </citation>
    <scope>NUCLEOTIDE SEQUENCE [LARGE SCALE GENOMIC DNA]</scope>
    <scope>IDENTIFICATION BY MASS SPECTROMETRY</scope>
    <scope>SUBCELLULAR LOCATION</scope>
    <source>
        <strain>ATCC MYA-4681 / CBS 112371</strain>
    </source>
</reference>
<reference key="2">
    <citation type="journal article" date="2011" name="Proteomics">
        <title>Identification of novel secreted proteases during extracellular proteolysis by dermatophytes at acidic pH.</title>
        <authorList>
            <person name="Sriranganadane D."/>
            <person name="Waridel P."/>
            <person name="Salamin K."/>
            <person name="Feuermann M."/>
            <person name="Mignon B."/>
            <person name="Staib P."/>
            <person name="Neuhaus J.M."/>
            <person name="Quadroni M."/>
            <person name="Monod M."/>
        </authorList>
    </citation>
    <scope>IDENTIFICATION BY MASS SPECTROMETRY</scope>
    <scope>SUBCELLULAR LOCATION</scope>
</reference>
<feature type="signal peptide" evidence="1">
    <location>
        <begin position="1"/>
        <end position="22"/>
    </location>
</feature>
<feature type="chain" id="PRO_0000434675" description="Putative secreted metallopeptidase" evidence="1">
    <location>
        <begin position="23"/>
        <end position="687"/>
    </location>
</feature>
<feature type="glycosylation site" description="N-linked (GlcNAc...) asparagine" evidence="2">
    <location>
        <position position="54"/>
    </location>
</feature>
<feature type="glycosylation site" description="N-linked (GlcNAc...) asparagine" evidence="2">
    <location>
        <position position="114"/>
    </location>
</feature>
<feature type="glycosylation site" description="N-linked (GlcNAc...) asparagine" evidence="2">
    <location>
        <position position="252"/>
    </location>
</feature>
<feature type="glycosylation site" description="N-linked (GlcNAc...) asparagine" evidence="2">
    <location>
        <position position="256"/>
    </location>
</feature>
<feature type="glycosylation site" description="N-linked (GlcNAc...) asparagine" evidence="2">
    <location>
        <position position="379"/>
    </location>
</feature>
<comment type="subcellular location">
    <subcellularLocation>
        <location evidence="3 4">Secreted</location>
    </subcellularLocation>
</comment>
<comment type="similarity">
    <text evidence="5">Belongs to the peptidase M10B family.</text>
</comment>
<name>A6334_ARTBC</name>
<accession>D4AQ27</accession>
<evidence type="ECO:0000255" key="1"/>
<evidence type="ECO:0000255" key="2">
    <source>
        <dbReference type="PROSITE-ProRule" id="PRU00498"/>
    </source>
</evidence>
<evidence type="ECO:0000269" key="3">
    <source>
    </source>
</evidence>
<evidence type="ECO:0000269" key="4">
    <source>
    </source>
</evidence>
<evidence type="ECO:0000305" key="5"/>
<keyword id="KW-0325">Glycoprotein</keyword>
<keyword id="KW-0378">Hydrolase</keyword>
<keyword id="KW-0482">Metalloprotease</keyword>
<keyword id="KW-0645">Protease</keyword>
<keyword id="KW-1185">Reference proteome</keyword>
<keyword id="KW-0964">Secreted</keyword>
<keyword id="KW-0732">Signal</keyword>